<reference key="1">
    <citation type="journal article" date="1995" name="Nucleic Acids Res.">
        <title>Analysis of the Escherichia coli genome VI: DNA sequence of the region from 92.8 through 100 minutes.</title>
        <authorList>
            <person name="Burland V.D."/>
            <person name="Plunkett G. III"/>
            <person name="Sofia H.J."/>
            <person name="Daniels D.L."/>
            <person name="Blattner F.R."/>
        </authorList>
    </citation>
    <scope>NUCLEOTIDE SEQUENCE [LARGE SCALE GENOMIC DNA]</scope>
    <source>
        <strain>K12 / MG1655 / ATCC 47076</strain>
    </source>
</reference>
<reference key="2">
    <citation type="journal article" date="1997" name="Science">
        <title>The complete genome sequence of Escherichia coli K-12.</title>
        <authorList>
            <person name="Blattner F.R."/>
            <person name="Plunkett G. III"/>
            <person name="Bloch C.A."/>
            <person name="Perna N.T."/>
            <person name="Burland V."/>
            <person name="Riley M."/>
            <person name="Collado-Vides J."/>
            <person name="Glasner J.D."/>
            <person name="Rode C.K."/>
            <person name="Mayhew G.F."/>
            <person name="Gregor J."/>
            <person name="Davis N.W."/>
            <person name="Kirkpatrick H.A."/>
            <person name="Goeden M.A."/>
            <person name="Rose D.J."/>
            <person name="Mau B."/>
            <person name="Shao Y."/>
        </authorList>
    </citation>
    <scope>NUCLEOTIDE SEQUENCE [LARGE SCALE GENOMIC DNA]</scope>
    <source>
        <strain>K12 / MG1655 / ATCC 47076</strain>
    </source>
</reference>
<name>YJGX_ECOLI</name>
<protein>
    <recommendedName>
        <fullName>Putative phosphoethanolamine transferase YjgX</fullName>
        <ecNumber>2.7.-.-</ecNumber>
    </recommendedName>
</protein>
<comment type="subcellular location">
    <subcellularLocation>
        <location evidence="2">Cell inner membrane</location>
        <topology evidence="2">Multi-pass membrane protein</topology>
    </subcellularLocation>
</comment>
<comment type="similarity">
    <text evidence="2">Belongs to the phosphoethanolamine transferase family.</text>
</comment>
<comment type="caution">
    <text evidence="2">Could be the product of a pseudogene, it is missing both the N- the C-terminus compared to orthologs.</text>
</comment>
<comment type="sequence caution" evidence="2">
    <conflict type="erroneous initiation">
        <sequence resource="EMBL-CDS" id="AAA97172"/>
    </conflict>
    <text>Extended N-terminus.</text>
</comment>
<dbReference type="EC" id="2.7.-.-"/>
<dbReference type="EMBL" id="U14003">
    <property type="protein sequence ID" value="AAA97172.1"/>
    <property type="status" value="ALT_INIT"/>
    <property type="molecule type" value="Genomic_DNA"/>
</dbReference>
<dbReference type="EMBL" id="U00096">
    <property type="status" value="NOT_ANNOTATED_CDS"/>
    <property type="molecule type" value="Genomic_DNA"/>
</dbReference>
<dbReference type="PIR" id="S56500">
    <property type="entry name" value="S56500"/>
</dbReference>
<dbReference type="PIR" id="S56501">
    <property type="entry name" value="S56501"/>
</dbReference>
<dbReference type="FunCoup" id="P39349">
    <property type="interactions" value="2"/>
</dbReference>
<dbReference type="EchoBASE" id="EB2431"/>
<dbReference type="InParanoid" id="P39349"/>
<dbReference type="PhylomeDB" id="P39349"/>
<dbReference type="Proteomes" id="UP000000625">
    <property type="component" value="Chromosome"/>
</dbReference>
<dbReference type="GO" id="GO:0005886">
    <property type="term" value="C:plasma membrane"/>
    <property type="evidence" value="ECO:0007669"/>
    <property type="project" value="UniProtKB-SubCell"/>
</dbReference>
<dbReference type="GO" id="GO:0016740">
    <property type="term" value="F:transferase activity"/>
    <property type="evidence" value="ECO:0007669"/>
    <property type="project" value="UniProtKB-KW"/>
</dbReference>
<sequence length="119" mass="13956">MNRPVFPVYHFLVSAAILVFVVIFWRTHHRDHRNWLALRLFVLCSVNRWPLRMVKGTVVGTTDTLREMQRYEQLSSTGLTTGKSSREHRYMIRLLLSLVRVCAGIICQCMTIPYQPHRG</sequence>
<gene>
    <name type="primary">yjgX</name>
    <name type="ordered locus">b4575</name>
    <name type="ORF">b4275/b4276/b4560</name>
</gene>
<accession>P39349</accession>
<accession>P39350</accession>
<feature type="chain" id="PRO_0000036215" description="Putative phosphoethanolamine transferase YjgX">
    <location>
        <begin position="1"/>
        <end position="119"/>
    </location>
</feature>
<feature type="transmembrane region" description="Helical" evidence="1">
    <location>
        <begin position="5"/>
        <end position="25"/>
    </location>
</feature>
<feature type="transmembrane region" description="Helical" evidence="1">
    <location>
        <begin position="94"/>
        <end position="114"/>
    </location>
</feature>
<organism>
    <name type="scientific">Escherichia coli (strain K12)</name>
    <dbReference type="NCBI Taxonomy" id="83333"/>
    <lineage>
        <taxon>Bacteria</taxon>
        <taxon>Pseudomonadati</taxon>
        <taxon>Pseudomonadota</taxon>
        <taxon>Gammaproteobacteria</taxon>
        <taxon>Enterobacterales</taxon>
        <taxon>Enterobacteriaceae</taxon>
        <taxon>Escherichia</taxon>
    </lineage>
</organism>
<evidence type="ECO:0000255" key="1"/>
<evidence type="ECO:0000305" key="2"/>
<keyword id="KW-0997">Cell inner membrane</keyword>
<keyword id="KW-1003">Cell membrane</keyword>
<keyword id="KW-0472">Membrane</keyword>
<keyword id="KW-1185">Reference proteome</keyword>
<keyword id="KW-0808">Transferase</keyword>
<keyword id="KW-0812">Transmembrane</keyword>
<keyword id="KW-1133">Transmembrane helix</keyword>
<proteinExistence type="uncertain"/>